<evidence type="ECO:0000255" key="1">
    <source>
        <dbReference type="HAMAP-Rule" id="MF_00169"/>
    </source>
</evidence>
<reference key="1">
    <citation type="journal article" date="2007" name="Genome Res.">
        <title>Genome sequence of a proteolytic (Group I) Clostridium botulinum strain Hall A and comparative analysis of the clostridial genomes.</title>
        <authorList>
            <person name="Sebaihia M."/>
            <person name="Peck M.W."/>
            <person name="Minton N.P."/>
            <person name="Thomson N.R."/>
            <person name="Holden M.T.G."/>
            <person name="Mitchell W.J."/>
            <person name="Carter A.T."/>
            <person name="Bentley S.D."/>
            <person name="Mason D.R."/>
            <person name="Crossman L."/>
            <person name="Paul C.J."/>
            <person name="Ivens A."/>
            <person name="Wells-Bennik M.H.J."/>
            <person name="Davis I.J."/>
            <person name="Cerdeno-Tarraga A.M."/>
            <person name="Churcher C."/>
            <person name="Quail M.A."/>
            <person name="Chillingworth T."/>
            <person name="Feltwell T."/>
            <person name="Fraser A."/>
            <person name="Goodhead I."/>
            <person name="Hance Z."/>
            <person name="Jagels K."/>
            <person name="Larke N."/>
            <person name="Maddison M."/>
            <person name="Moule S."/>
            <person name="Mungall K."/>
            <person name="Norbertczak H."/>
            <person name="Rabbinowitsch E."/>
            <person name="Sanders M."/>
            <person name="Simmonds M."/>
            <person name="White B."/>
            <person name="Whithead S."/>
            <person name="Parkhill J."/>
        </authorList>
    </citation>
    <scope>NUCLEOTIDE SEQUENCE [LARGE SCALE GENOMIC DNA]</scope>
    <source>
        <strain>Hall / ATCC 3502 / NCTC 13319 / Type A</strain>
    </source>
</reference>
<reference key="2">
    <citation type="journal article" date="2007" name="PLoS ONE">
        <title>Analysis of the neurotoxin complex genes in Clostridium botulinum A1-A4 and B1 strains: BoNT/A3, /Ba4 and /B1 clusters are located within plasmids.</title>
        <authorList>
            <person name="Smith T.J."/>
            <person name="Hill K.K."/>
            <person name="Foley B.T."/>
            <person name="Detter J.C."/>
            <person name="Munk A.C."/>
            <person name="Bruce D.C."/>
            <person name="Doggett N.A."/>
            <person name="Smith L.A."/>
            <person name="Marks J.D."/>
            <person name="Xie G."/>
            <person name="Brettin T.S."/>
        </authorList>
    </citation>
    <scope>NUCLEOTIDE SEQUENCE [LARGE SCALE GENOMIC DNA]</scope>
    <source>
        <strain>Hall / ATCC 3502 / NCTC 13319 / Type A</strain>
    </source>
</reference>
<sequence length="147" mass="16878">MNNILVINGPNLNLLGKREPDIYGNITLENINQKIKLHFKNEDLKIDFFQSNEEGKIIDKIIESEKKYNAIVINPAAYSHYSIAILDAMRSINIPVVEVHLSNIYKREEYRKKSVTAEASLGVISGFGYYGYIMAIEFILNNLVRER</sequence>
<gene>
    <name evidence="1" type="primary">aroQ</name>
    <name type="ordered locus">CBO1898</name>
    <name type="ordered locus">CLC_1842</name>
</gene>
<feature type="chain" id="PRO_1000203668" description="3-dehydroquinate dehydratase">
    <location>
        <begin position="1"/>
        <end position="147"/>
    </location>
</feature>
<feature type="active site" description="Proton acceptor" evidence="1">
    <location>
        <position position="23"/>
    </location>
</feature>
<feature type="active site" description="Proton donor" evidence="1">
    <location>
        <position position="100"/>
    </location>
</feature>
<feature type="binding site" evidence="1">
    <location>
        <position position="74"/>
    </location>
    <ligand>
        <name>substrate</name>
    </ligand>
</feature>
<feature type="binding site" evidence="1">
    <location>
        <position position="80"/>
    </location>
    <ligand>
        <name>substrate</name>
    </ligand>
</feature>
<feature type="binding site" evidence="1">
    <location>
        <position position="87"/>
    </location>
    <ligand>
        <name>substrate</name>
    </ligand>
</feature>
<feature type="binding site" evidence="1">
    <location>
        <begin position="101"/>
        <end position="102"/>
    </location>
    <ligand>
        <name>substrate</name>
    </ligand>
</feature>
<feature type="binding site" evidence="1">
    <location>
        <position position="111"/>
    </location>
    <ligand>
        <name>substrate</name>
    </ligand>
</feature>
<feature type="site" description="Transition state stabilizer" evidence="1">
    <location>
        <position position="18"/>
    </location>
</feature>
<keyword id="KW-0028">Amino-acid biosynthesis</keyword>
<keyword id="KW-0057">Aromatic amino acid biosynthesis</keyword>
<keyword id="KW-0456">Lyase</keyword>
<keyword id="KW-1185">Reference proteome</keyword>
<protein>
    <recommendedName>
        <fullName evidence="1">3-dehydroquinate dehydratase</fullName>
        <shortName evidence="1">3-dehydroquinase</shortName>
        <ecNumber evidence="1">4.2.1.10</ecNumber>
    </recommendedName>
    <alternativeName>
        <fullName evidence="1">Type II DHQase</fullName>
    </alternativeName>
</protein>
<proteinExistence type="inferred from homology"/>
<name>AROQ_CLOBH</name>
<dbReference type="EC" id="4.2.1.10" evidence="1"/>
<dbReference type="EMBL" id="CP000727">
    <property type="protein sequence ID" value="ABS38620.1"/>
    <property type="molecule type" value="Genomic_DNA"/>
</dbReference>
<dbReference type="EMBL" id="AM412317">
    <property type="protein sequence ID" value="CAL83439.1"/>
    <property type="molecule type" value="Genomic_DNA"/>
</dbReference>
<dbReference type="RefSeq" id="WP_011986444.1">
    <property type="nucleotide sequence ID" value="NC_009698.1"/>
</dbReference>
<dbReference type="RefSeq" id="YP_001254400.1">
    <property type="nucleotide sequence ID" value="NC_009495.1"/>
</dbReference>
<dbReference type="RefSeq" id="YP_001387697.1">
    <property type="nucleotide sequence ID" value="NC_009698.1"/>
</dbReference>
<dbReference type="SMR" id="A5I322"/>
<dbReference type="GeneID" id="5187778"/>
<dbReference type="KEGG" id="cbh:CLC_1842"/>
<dbReference type="KEGG" id="cbo:CBO1898"/>
<dbReference type="PATRIC" id="fig|413999.7.peg.1870"/>
<dbReference type="HOGENOM" id="CLU_090968_2_0_9"/>
<dbReference type="UniPathway" id="UPA00053">
    <property type="reaction ID" value="UER00086"/>
</dbReference>
<dbReference type="PRO" id="PR:A5I322"/>
<dbReference type="Proteomes" id="UP000001986">
    <property type="component" value="Chromosome"/>
</dbReference>
<dbReference type="GO" id="GO:0003855">
    <property type="term" value="F:3-dehydroquinate dehydratase activity"/>
    <property type="evidence" value="ECO:0000318"/>
    <property type="project" value="GO_Central"/>
</dbReference>
<dbReference type="GO" id="GO:0008652">
    <property type="term" value="P:amino acid biosynthetic process"/>
    <property type="evidence" value="ECO:0007669"/>
    <property type="project" value="UniProtKB-KW"/>
</dbReference>
<dbReference type="GO" id="GO:0009073">
    <property type="term" value="P:aromatic amino acid family biosynthetic process"/>
    <property type="evidence" value="ECO:0007669"/>
    <property type="project" value="UniProtKB-KW"/>
</dbReference>
<dbReference type="GO" id="GO:0009423">
    <property type="term" value="P:chorismate biosynthetic process"/>
    <property type="evidence" value="ECO:0007669"/>
    <property type="project" value="UniProtKB-UniRule"/>
</dbReference>
<dbReference type="GO" id="GO:0019631">
    <property type="term" value="P:quinate catabolic process"/>
    <property type="evidence" value="ECO:0000318"/>
    <property type="project" value="GO_Central"/>
</dbReference>
<dbReference type="CDD" id="cd00466">
    <property type="entry name" value="DHQase_II"/>
    <property type="match status" value="1"/>
</dbReference>
<dbReference type="Gene3D" id="3.40.50.9100">
    <property type="entry name" value="Dehydroquinase, class II"/>
    <property type="match status" value="1"/>
</dbReference>
<dbReference type="HAMAP" id="MF_00169">
    <property type="entry name" value="AroQ"/>
    <property type="match status" value="1"/>
</dbReference>
<dbReference type="InterPro" id="IPR001874">
    <property type="entry name" value="DHquinase_II"/>
</dbReference>
<dbReference type="InterPro" id="IPR018509">
    <property type="entry name" value="DHquinase_II_CS"/>
</dbReference>
<dbReference type="InterPro" id="IPR036441">
    <property type="entry name" value="DHquinase_II_sf"/>
</dbReference>
<dbReference type="NCBIfam" id="TIGR01088">
    <property type="entry name" value="aroQ"/>
    <property type="match status" value="1"/>
</dbReference>
<dbReference type="NCBIfam" id="NF003805">
    <property type="entry name" value="PRK05395.1-2"/>
    <property type="match status" value="1"/>
</dbReference>
<dbReference type="NCBIfam" id="NF003806">
    <property type="entry name" value="PRK05395.1-3"/>
    <property type="match status" value="1"/>
</dbReference>
<dbReference type="NCBIfam" id="NF003807">
    <property type="entry name" value="PRK05395.1-4"/>
    <property type="match status" value="1"/>
</dbReference>
<dbReference type="PANTHER" id="PTHR21272">
    <property type="entry name" value="CATABOLIC 3-DEHYDROQUINASE"/>
    <property type="match status" value="1"/>
</dbReference>
<dbReference type="PANTHER" id="PTHR21272:SF3">
    <property type="entry name" value="CATABOLIC 3-DEHYDROQUINASE"/>
    <property type="match status" value="1"/>
</dbReference>
<dbReference type="Pfam" id="PF01220">
    <property type="entry name" value="DHquinase_II"/>
    <property type="match status" value="1"/>
</dbReference>
<dbReference type="PIRSF" id="PIRSF001399">
    <property type="entry name" value="DHquinase_II"/>
    <property type="match status" value="1"/>
</dbReference>
<dbReference type="SUPFAM" id="SSF52304">
    <property type="entry name" value="Type II 3-dehydroquinate dehydratase"/>
    <property type="match status" value="1"/>
</dbReference>
<dbReference type="PROSITE" id="PS01029">
    <property type="entry name" value="DEHYDROQUINASE_II"/>
    <property type="match status" value="1"/>
</dbReference>
<organism>
    <name type="scientific">Clostridium botulinum (strain Hall / ATCC 3502 / NCTC 13319 / Type A)</name>
    <dbReference type="NCBI Taxonomy" id="441771"/>
    <lineage>
        <taxon>Bacteria</taxon>
        <taxon>Bacillati</taxon>
        <taxon>Bacillota</taxon>
        <taxon>Clostridia</taxon>
        <taxon>Eubacteriales</taxon>
        <taxon>Clostridiaceae</taxon>
        <taxon>Clostridium</taxon>
    </lineage>
</organism>
<accession>A5I322</accession>
<accession>A7G4I2</accession>
<comment type="function">
    <text evidence="1">Catalyzes a trans-dehydration via an enolate intermediate.</text>
</comment>
<comment type="catalytic activity">
    <reaction evidence="1">
        <text>3-dehydroquinate = 3-dehydroshikimate + H2O</text>
        <dbReference type="Rhea" id="RHEA:21096"/>
        <dbReference type="ChEBI" id="CHEBI:15377"/>
        <dbReference type="ChEBI" id="CHEBI:16630"/>
        <dbReference type="ChEBI" id="CHEBI:32364"/>
        <dbReference type="EC" id="4.2.1.10"/>
    </reaction>
</comment>
<comment type="pathway">
    <text evidence="1">Metabolic intermediate biosynthesis; chorismate biosynthesis; chorismate from D-erythrose 4-phosphate and phosphoenolpyruvate: step 3/7.</text>
</comment>
<comment type="subunit">
    <text evidence="1">Homododecamer.</text>
</comment>
<comment type="similarity">
    <text evidence="1">Belongs to the type-II 3-dehydroquinase family.</text>
</comment>